<evidence type="ECO:0000250" key="1">
    <source>
        <dbReference type="UniProtKB" id="P01138"/>
    </source>
</evidence>
<evidence type="ECO:0000250" key="2">
    <source>
        <dbReference type="UniProtKB" id="P01139"/>
    </source>
</evidence>
<evidence type="ECO:0000255" key="3"/>
<evidence type="ECO:0000305" key="4"/>
<gene>
    <name type="primary">NGF</name>
    <name type="synonym">NGFB</name>
</gene>
<feature type="signal peptide" evidence="3">
    <location>
        <begin position="1"/>
        <end position="18"/>
    </location>
</feature>
<feature type="propeptide" id="PRO_0000019607">
    <location>
        <begin position="19"/>
        <end position="121"/>
    </location>
</feature>
<feature type="chain" id="PRO_0000019608" description="Beta-nerve growth factor">
    <location>
        <begin position="122"/>
        <end position="241"/>
    </location>
</feature>
<feature type="glycosylation site" description="N-linked (GlcNAc...) asparagine" evidence="3">
    <location>
        <position position="69"/>
    </location>
</feature>
<feature type="glycosylation site" description="N-linked (GlcNAc...) asparagine" evidence="3">
    <location>
        <position position="114"/>
    </location>
</feature>
<feature type="glycosylation site" description="N-linked (GlcNAc...) asparagine" evidence="3">
    <location>
        <position position="166"/>
    </location>
</feature>
<feature type="disulfide bond" evidence="1">
    <location>
        <begin position="136"/>
        <end position="201"/>
    </location>
</feature>
<feature type="disulfide bond" evidence="1">
    <location>
        <begin position="179"/>
        <end position="229"/>
    </location>
</feature>
<feature type="disulfide bond" evidence="1">
    <location>
        <begin position="189"/>
        <end position="231"/>
    </location>
</feature>
<comment type="function">
    <text evidence="1">Nerve growth factor is important for the development and maintenance of the sympathetic and sensory nervous systems. Extracellular ligand for the NTRK1 and NGFR receptors, activates cellular signaling cascades through those receptor tyrosine kinase to regulate neuronal proliferation, differentiation and survival. Inhibits metalloproteinase dependent proteolysis of platelet glycoprotein VI.</text>
</comment>
<comment type="subunit">
    <text evidence="1 2">Homodimer. The homodimer interacts with a single NTRK1 chain. The homodimer interacts with a single NGFR chain (By similarity). The NGF dimer interacts with a single SORCS2 chain (via extracellular domain). The NGF precursor (proNGF) binds to a receptor complex formed by SORT1 and NGFR, which leads to NGF endocytosis. Both mature NGF and the immature NGF precursor (proNGF) interact with SORCS2 and with the heterodimer formed by SORCS2 and NGFR (via extracellular domains). The NGF precursor (proNGF) has much higher affinity for SORCS2 than mature NGF. The NGF precursor (proNGF) has much higher affinity for SORT1 than mature NGF (By similarity). Interacts with ADAM10 in a divalent cation-dependent manner (By similarity). Interacts with SORCS3 (By similarity).</text>
</comment>
<comment type="subcellular location">
    <subcellularLocation>
        <location evidence="1">Secreted</location>
    </subcellularLocation>
    <subcellularLocation>
        <location evidence="2">Endosome lumen</location>
    </subcellularLocation>
    <text evidence="2">ProNGF is endocytosed after binding to the cell surface receptor formed by SORT1 and NGFR.</text>
</comment>
<comment type="similarity">
    <text evidence="4">Belongs to the NGF-beta family.</text>
</comment>
<comment type="sequence caution" evidence="4">
    <conflict type="erroneous initiation">
        <sequence resource="EMBL-CDS" id="AAA40599"/>
    </conflict>
    <text>Extended N-terminus.</text>
</comment>
<name>NGF_MASNA</name>
<reference key="1">
    <citation type="journal article" date="1988" name="Gene">
        <title>Molecular cloning of a cDNA encoding the nerve growth factor precursor from Mastomys natalensis.</title>
        <authorList>
            <person name="Fahnestock M."/>
            <person name="Bell R.A."/>
        </authorList>
    </citation>
    <scope>NUCLEOTIDE SEQUENCE [MRNA]</scope>
</reference>
<sequence>MSMLFYTLITALLIGVQAEPYTDSNLPEGDSVPEAHWTKLQHSLDTALRRARSAPAAPIAARVTGQTRNITVDPRLFKKRKLRSPRVLFSTQPPPTSSDTLDLDFQAHGTISFNRTHRSKRSSTHPVFQMGEFSVCDSVSVWVGDKTTATDIKGNEVTVLGEVNINNSVFKQYFFETKCRARNPVESGCRGIDSKHWNSYCTTTHTFVKALTTDDRQAAWRFIRIDTACVCVLTRKAPRRG</sequence>
<accession>P20675</accession>
<proteinExistence type="evidence at transcript level"/>
<organism>
    <name type="scientific">Mastomys natalensis</name>
    <name type="common">African soft-furred rat</name>
    <name type="synonym">Praomys natalensis</name>
    <dbReference type="NCBI Taxonomy" id="10112"/>
    <lineage>
        <taxon>Eukaryota</taxon>
        <taxon>Metazoa</taxon>
        <taxon>Chordata</taxon>
        <taxon>Craniata</taxon>
        <taxon>Vertebrata</taxon>
        <taxon>Euteleostomi</taxon>
        <taxon>Mammalia</taxon>
        <taxon>Eutheria</taxon>
        <taxon>Euarchontoglires</taxon>
        <taxon>Glires</taxon>
        <taxon>Rodentia</taxon>
        <taxon>Myomorpha</taxon>
        <taxon>Muroidea</taxon>
        <taxon>Muridae</taxon>
        <taxon>Murinae</taxon>
        <taxon>Mastomys</taxon>
    </lineage>
</organism>
<dbReference type="EMBL" id="M22748">
    <property type="protein sequence ID" value="AAA40599.1"/>
    <property type="status" value="ALT_INIT"/>
    <property type="molecule type" value="mRNA"/>
</dbReference>
<dbReference type="PIR" id="JT0343">
    <property type="entry name" value="NGRTBA"/>
</dbReference>
<dbReference type="SMR" id="P20675"/>
<dbReference type="GlyCosmos" id="P20675">
    <property type="glycosylation" value="3 sites, No reported glycans"/>
</dbReference>
<dbReference type="GO" id="GO:0030424">
    <property type="term" value="C:axon"/>
    <property type="evidence" value="ECO:0007669"/>
    <property type="project" value="TreeGrafter"/>
</dbReference>
<dbReference type="GO" id="GO:0030425">
    <property type="term" value="C:dendrite"/>
    <property type="evidence" value="ECO:0007669"/>
    <property type="project" value="TreeGrafter"/>
</dbReference>
<dbReference type="GO" id="GO:0005615">
    <property type="term" value="C:extracellular space"/>
    <property type="evidence" value="ECO:0007669"/>
    <property type="project" value="TreeGrafter"/>
</dbReference>
<dbReference type="GO" id="GO:0008021">
    <property type="term" value="C:synaptic vesicle"/>
    <property type="evidence" value="ECO:0007669"/>
    <property type="project" value="TreeGrafter"/>
</dbReference>
<dbReference type="GO" id="GO:0008083">
    <property type="term" value="F:growth factor activity"/>
    <property type="evidence" value="ECO:0007669"/>
    <property type="project" value="UniProtKB-KW"/>
</dbReference>
<dbReference type="GO" id="GO:0008191">
    <property type="term" value="F:metalloendopeptidase inhibitor activity"/>
    <property type="evidence" value="ECO:0000250"/>
    <property type="project" value="UniProtKB"/>
</dbReference>
<dbReference type="GO" id="GO:0005163">
    <property type="term" value="F:nerve growth factor receptor binding"/>
    <property type="evidence" value="ECO:0007669"/>
    <property type="project" value="TreeGrafter"/>
</dbReference>
<dbReference type="GO" id="GO:0007169">
    <property type="term" value="P:cell surface receptor protein tyrosine kinase signaling pathway"/>
    <property type="evidence" value="ECO:0007669"/>
    <property type="project" value="TreeGrafter"/>
</dbReference>
<dbReference type="GO" id="GO:0050804">
    <property type="term" value="P:modulation of chemical synaptic transmission"/>
    <property type="evidence" value="ECO:0007669"/>
    <property type="project" value="TreeGrafter"/>
</dbReference>
<dbReference type="GO" id="GO:0043524">
    <property type="term" value="P:negative regulation of neuron apoptotic process"/>
    <property type="evidence" value="ECO:0007669"/>
    <property type="project" value="TreeGrafter"/>
</dbReference>
<dbReference type="GO" id="GO:0021675">
    <property type="term" value="P:nerve development"/>
    <property type="evidence" value="ECO:0007669"/>
    <property type="project" value="TreeGrafter"/>
</dbReference>
<dbReference type="GO" id="GO:0038180">
    <property type="term" value="P:nerve growth factor signaling pathway"/>
    <property type="evidence" value="ECO:0007669"/>
    <property type="project" value="TreeGrafter"/>
</dbReference>
<dbReference type="GO" id="GO:0048812">
    <property type="term" value="P:neuron projection morphogenesis"/>
    <property type="evidence" value="ECO:0007669"/>
    <property type="project" value="TreeGrafter"/>
</dbReference>
<dbReference type="FunFam" id="2.10.90.10:FF:000002">
    <property type="entry name" value="Brain-derived neurotrophic factor"/>
    <property type="match status" value="1"/>
</dbReference>
<dbReference type="Gene3D" id="2.10.90.10">
    <property type="entry name" value="Cystine-knot cytokines"/>
    <property type="match status" value="1"/>
</dbReference>
<dbReference type="InterPro" id="IPR029034">
    <property type="entry name" value="Cystine-knot_cytokine"/>
</dbReference>
<dbReference type="InterPro" id="IPR020408">
    <property type="entry name" value="Nerve_growth_factor-like"/>
</dbReference>
<dbReference type="InterPro" id="IPR002072">
    <property type="entry name" value="Nerve_growth_factor-rel"/>
</dbReference>
<dbReference type="InterPro" id="IPR020425">
    <property type="entry name" value="Nerve_growth_factor_bsu"/>
</dbReference>
<dbReference type="InterPro" id="IPR020437">
    <property type="entry name" value="Nerve_growth_factor_bsu_mml"/>
</dbReference>
<dbReference type="InterPro" id="IPR019846">
    <property type="entry name" value="Nerve_growth_factor_CS"/>
</dbReference>
<dbReference type="PANTHER" id="PTHR11589:SF10">
    <property type="entry name" value="BETA-NERVE GROWTH FACTOR"/>
    <property type="match status" value="1"/>
</dbReference>
<dbReference type="PANTHER" id="PTHR11589">
    <property type="entry name" value="NERVE GROWTH FACTOR NGF -RELATED"/>
    <property type="match status" value="1"/>
</dbReference>
<dbReference type="Pfam" id="PF00243">
    <property type="entry name" value="NGF"/>
    <property type="match status" value="1"/>
</dbReference>
<dbReference type="PIRSF" id="PIRSF001789">
    <property type="entry name" value="NGF"/>
    <property type="match status" value="1"/>
</dbReference>
<dbReference type="PRINTS" id="PR01925">
    <property type="entry name" value="MAMLNGFBETA"/>
</dbReference>
<dbReference type="PRINTS" id="PR00268">
    <property type="entry name" value="NGF"/>
</dbReference>
<dbReference type="PRINTS" id="PR01913">
    <property type="entry name" value="NGFBETA"/>
</dbReference>
<dbReference type="SMART" id="SM00140">
    <property type="entry name" value="NGF"/>
    <property type="match status" value="1"/>
</dbReference>
<dbReference type="SUPFAM" id="SSF57501">
    <property type="entry name" value="Cystine-knot cytokines"/>
    <property type="match status" value="1"/>
</dbReference>
<dbReference type="PROSITE" id="PS00248">
    <property type="entry name" value="NGF_1"/>
    <property type="match status" value="1"/>
</dbReference>
<dbReference type="PROSITE" id="PS50270">
    <property type="entry name" value="NGF_2"/>
    <property type="match status" value="1"/>
</dbReference>
<keyword id="KW-0165">Cleavage on pair of basic residues</keyword>
<keyword id="KW-1015">Disulfide bond</keyword>
<keyword id="KW-0967">Endosome</keyword>
<keyword id="KW-0325">Glycoprotein</keyword>
<keyword id="KW-0339">Growth factor</keyword>
<keyword id="KW-0481">Metalloenzyme inhibitor</keyword>
<keyword id="KW-0483">Metalloprotease inhibitor</keyword>
<keyword id="KW-0646">Protease inhibitor</keyword>
<keyword id="KW-0964">Secreted</keyword>
<keyword id="KW-0732">Signal</keyword>
<protein>
    <recommendedName>
        <fullName>Beta-nerve growth factor</fullName>
        <shortName>Beta-NGF</shortName>
    </recommendedName>
</protein>